<proteinExistence type="inferred from homology"/>
<gene>
    <name evidence="1" type="primary">dut</name>
    <name type="ordered locus">Asuc_0011</name>
</gene>
<protein>
    <recommendedName>
        <fullName evidence="1">Deoxyuridine 5'-triphosphate nucleotidohydrolase</fullName>
        <shortName evidence="1">dUTPase</shortName>
        <ecNumber evidence="1">3.6.1.23</ecNumber>
    </recommendedName>
    <alternativeName>
        <fullName evidence="1">dUTP pyrophosphatase</fullName>
    </alternativeName>
</protein>
<reference key="1">
    <citation type="journal article" date="2010" name="BMC Genomics">
        <title>A genomic perspective on the potential of Actinobacillus succinogenes for industrial succinate production.</title>
        <authorList>
            <person name="McKinlay J.B."/>
            <person name="Laivenieks M."/>
            <person name="Schindler B.D."/>
            <person name="McKinlay A.A."/>
            <person name="Siddaramappa S."/>
            <person name="Challacombe J.F."/>
            <person name="Lowry S.R."/>
            <person name="Clum A."/>
            <person name="Lapidus A.L."/>
            <person name="Burkhart K.B."/>
            <person name="Harkins V."/>
            <person name="Vieille C."/>
        </authorList>
    </citation>
    <scope>NUCLEOTIDE SEQUENCE [LARGE SCALE GENOMIC DNA]</scope>
    <source>
        <strain>ATCC 55618 / DSM 22257 / CCUG 43843 / 130Z</strain>
    </source>
</reference>
<evidence type="ECO:0000255" key="1">
    <source>
        <dbReference type="HAMAP-Rule" id="MF_00116"/>
    </source>
</evidence>
<organism>
    <name type="scientific">Actinobacillus succinogenes (strain ATCC 55618 / DSM 22257 / CCUG 43843 / 130Z)</name>
    <dbReference type="NCBI Taxonomy" id="339671"/>
    <lineage>
        <taxon>Bacteria</taxon>
        <taxon>Pseudomonadati</taxon>
        <taxon>Pseudomonadota</taxon>
        <taxon>Gammaproteobacteria</taxon>
        <taxon>Pasteurellales</taxon>
        <taxon>Pasteurellaceae</taxon>
        <taxon>Actinobacillus</taxon>
    </lineage>
</organism>
<dbReference type="EC" id="3.6.1.23" evidence="1"/>
<dbReference type="EMBL" id="CP000746">
    <property type="protein sequence ID" value="ABR73393.1"/>
    <property type="molecule type" value="Genomic_DNA"/>
</dbReference>
<dbReference type="RefSeq" id="WP_011978670.1">
    <property type="nucleotide sequence ID" value="NC_009655.1"/>
</dbReference>
<dbReference type="SMR" id="A6VK96"/>
<dbReference type="STRING" id="339671.Asuc_0011"/>
<dbReference type="KEGG" id="asu:Asuc_0011"/>
<dbReference type="eggNOG" id="COG0756">
    <property type="taxonomic scope" value="Bacteria"/>
</dbReference>
<dbReference type="HOGENOM" id="CLU_068508_1_1_6"/>
<dbReference type="OrthoDB" id="9809956at2"/>
<dbReference type="UniPathway" id="UPA00610">
    <property type="reaction ID" value="UER00666"/>
</dbReference>
<dbReference type="Proteomes" id="UP000001114">
    <property type="component" value="Chromosome"/>
</dbReference>
<dbReference type="GO" id="GO:0004170">
    <property type="term" value="F:dUTP diphosphatase activity"/>
    <property type="evidence" value="ECO:0007669"/>
    <property type="project" value="UniProtKB-UniRule"/>
</dbReference>
<dbReference type="GO" id="GO:0000287">
    <property type="term" value="F:magnesium ion binding"/>
    <property type="evidence" value="ECO:0007669"/>
    <property type="project" value="UniProtKB-UniRule"/>
</dbReference>
<dbReference type="GO" id="GO:0006226">
    <property type="term" value="P:dUMP biosynthetic process"/>
    <property type="evidence" value="ECO:0007669"/>
    <property type="project" value="UniProtKB-UniRule"/>
</dbReference>
<dbReference type="GO" id="GO:0046081">
    <property type="term" value="P:dUTP catabolic process"/>
    <property type="evidence" value="ECO:0007669"/>
    <property type="project" value="InterPro"/>
</dbReference>
<dbReference type="CDD" id="cd07557">
    <property type="entry name" value="trimeric_dUTPase"/>
    <property type="match status" value="1"/>
</dbReference>
<dbReference type="FunFam" id="2.70.40.10:FF:000002">
    <property type="entry name" value="dUTP diphosphatase"/>
    <property type="match status" value="1"/>
</dbReference>
<dbReference type="Gene3D" id="2.70.40.10">
    <property type="match status" value="1"/>
</dbReference>
<dbReference type="HAMAP" id="MF_00116">
    <property type="entry name" value="dUTPase_bact"/>
    <property type="match status" value="1"/>
</dbReference>
<dbReference type="InterPro" id="IPR008181">
    <property type="entry name" value="dUTPase"/>
</dbReference>
<dbReference type="InterPro" id="IPR029054">
    <property type="entry name" value="dUTPase-like"/>
</dbReference>
<dbReference type="InterPro" id="IPR036157">
    <property type="entry name" value="dUTPase-like_sf"/>
</dbReference>
<dbReference type="InterPro" id="IPR033704">
    <property type="entry name" value="dUTPase_trimeric"/>
</dbReference>
<dbReference type="NCBIfam" id="TIGR00576">
    <property type="entry name" value="dut"/>
    <property type="match status" value="1"/>
</dbReference>
<dbReference type="NCBIfam" id="NF001862">
    <property type="entry name" value="PRK00601.1"/>
    <property type="match status" value="1"/>
</dbReference>
<dbReference type="PANTHER" id="PTHR11241">
    <property type="entry name" value="DEOXYURIDINE 5'-TRIPHOSPHATE NUCLEOTIDOHYDROLASE"/>
    <property type="match status" value="1"/>
</dbReference>
<dbReference type="PANTHER" id="PTHR11241:SF0">
    <property type="entry name" value="DEOXYURIDINE 5'-TRIPHOSPHATE NUCLEOTIDOHYDROLASE"/>
    <property type="match status" value="1"/>
</dbReference>
<dbReference type="Pfam" id="PF00692">
    <property type="entry name" value="dUTPase"/>
    <property type="match status" value="1"/>
</dbReference>
<dbReference type="SUPFAM" id="SSF51283">
    <property type="entry name" value="dUTPase-like"/>
    <property type="match status" value="1"/>
</dbReference>
<feature type="chain" id="PRO_1000071352" description="Deoxyuridine 5'-triphosphate nucleotidohydrolase">
    <location>
        <begin position="1"/>
        <end position="151"/>
    </location>
</feature>
<feature type="binding site" evidence="1">
    <location>
        <begin position="70"/>
        <end position="72"/>
    </location>
    <ligand>
        <name>substrate</name>
    </ligand>
</feature>
<feature type="binding site" evidence="1">
    <location>
        <position position="83"/>
    </location>
    <ligand>
        <name>substrate</name>
    </ligand>
</feature>
<feature type="binding site" evidence="1">
    <location>
        <begin position="87"/>
        <end position="89"/>
    </location>
    <ligand>
        <name>substrate</name>
    </ligand>
</feature>
<feature type="binding site" evidence="1">
    <location>
        <position position="97"/>
    </location>
    <ligand>
        <name>substrate</name>
    </ligand>
</feature>
<sequence length="151" mass="16260">MKKIDVKILDSRIGAQFPLPAYATTGSAGLDLRALTDEAFEIQPGETKLIPTGLSVYIADPQLAAVILPRSGLGHKHGVVLGNLVGLIDSDYQGPLMVSMWNRSDKPFKVEVGDRIAQLVFVPVVQAEFNIVAEFEQTDRGEGGFGHSGKK</sequence>
<accession>A6VK96</accession>
<comment type="function">
    <text evidence="1">This enzyme is involved in nucleotide metabolism: it produces dUMP, the immediate precursor of thymidine nucleotides and it decreases the intracellular concentration of dUTP so that uracil cannot be incorporated into DNA.</text>
</comment>
<comment type="catalytic activity">
    <reaction evidence="1">
        <text>dUTP + H2O = dUMP + diphosphate + H(+)</text>
        <dbReference type="Rhea" id="RHEA:10248"/>
        <dbReference type="ChEBI" id="CHEBI:15377"/>
        <dbReference type="ChEBI" id="CHEBI:15378"/>
        <dbReference type="ChEBI" id="CHEBI:33019"/>
        <dbReference type="ChEBI" id="CHEBI:61555"/>
        <dbReference type="ChEBI" id="CHEBI:246422"/>
        <dbReference type="EC" id="3.6.1.23"/>
    </reaction>
</comment>
<comment type="cofactor">
    <cofactor evidence="1">
        <name>Mg(2+)</name>
        <dbReference type="ChEBI" id="CHEBI:18420"/>
    </cofactor>
</comment>
<comment type="pathway">
    <text evidence="1">Pyrimidine metabolism; dUMP biosynthesis; dUMP from dCTP (dUTP route): step 2/2.</text>
</comment>
<comment type="similarity">
    <text evidence="1">Belongs to the dUTPase family.</text>
</comment>
<name>DUT_ACTSZ</name>
<keyword id="KW-0378">Hydrolase</keyword>
<keyword id="KW-0460">Magnesium</keyword>
<keyword id="KW-0479">Metal-binding</keyword>
<keyword id="KW-0546">Nucleotide metabolism</keyword>
<keyword id="KW-1185">Reference proteome</keyword>